<feature type="chain" id="PRO_0000361090" description="Uncharacterized protein YjcQ">
    <location>
        <begin position="1"/>
        <end position="94"/>
    </location>
</feature>
<feature type="helix" evidence="2">
    <location>
        <begin position="7"/>
        <end position="17"/>
    </location>
</feature>
<feature type="helix" evidence="2">
    <location>
        <begin position="23"/>
        <end position="26"/>
    </location>
</feature>
<feature type="helix" evidence="2">
    <location>
        <begin position="30"/>
        <end position="43"/>
    </location>
</feature>
<feature type="strand" evidence="2">
    <location>
        <begin position="45"/>
        <end position="47"/>
    </location>
</feature>
<feature type="strand" evidence="2">
    <location>
        <begin position="50"/>
        <end position="57"/>
    </location>
</feature>
<feature type="helix" evidence="2">
    <location>
        <begin position="67"/>
        <end position="76"/>
    </location>
</feature>
<name>YJCQ_BACSU</name>
<comment type="induction">
    <text evidence="1">Expression is sigma D-dependent.</text>
</comment>
<organism>
    <name type="scientific">Bacillus subtilis (strain 168)</name>
    <dbReference type="NCBI Taxonomy" id="224308"/>
    <lineage>
        <taxon>Bacteria</taxon>
        <taxon>Bacillati</taxon>
        <taxon>Bacillota</taxon>
        <taxon>Bacilli</taxon>
        <taxon>Bacillales</taxon>
        <taxon>Bacillaceae</taxon>
        <taxon>Bacillus</taxon>
    </lineage>
</organism>
<reference key="1">
    <citation type="journal article" date="1997" name="Nature">
        <title>The complete genome sequence of the Gram-positive bacterium Bacillus subtilis.</title>
        <authorList>
            <person name="Kunst F."/>
            <person name="Ogasawara N."/>
            <person name="Moszer I."/>
            <person name="Albertini A.M."/>
            <person name="Alloni G."/>
            <person name="Azevedo V."/>
            <person name="Bertero M.G."/>
            <person name="Bessieres P."/>
            <person name="Bolotin A."/>
            <person name="Borchert S."/>
            <person name="Borriss R."/>
            <person name="Boursier L."/>
            <person name="Brans A."/>
            <person name="Braun M."/>
            <person name="Brignell S.C."/>
            <person name="Bron S."/>
            <person name="Brouillet S."/>
            <person name="Bruschi C.V."/>
            <person name="Caldwell B."/>
            <person name="Capuano V."/>
            <person name="Carter N.M."/>
            <person name="Choi S.-K."/>
            <person name="Codani J.-J."/>
            <person name="Connerton I.F."/>
            <person name="Cummings N.J."/>
            <person name="Daniel R.A."/>
            <person name="Denizot F."/>
            <person name="Devine K.M."/>
            <person name="Duesterhoeft A."/>
            <person name="Ehrlich S.D."/>
            <person name="Emmerson P.T."/>
            <person name="Entian K.-D."/>
            <person name="Errington J."/>
            <person name="Fabret C."/>
            <person name="Ferrari E."/>
            <person name="Foulger D."/>
            <person name="Fritz C."/>
            <person name="Fujita M."/>
            <person name="Fujita Y."/>
            <person name="Fuma S."/>
            <person name="Galizzi A."/>
            <person name="Galleron N."/>
            <person name="Ghim S.-Y."/>
            <person name="Glaser P."/>
            <person name="Goffeau A."/>
            <person name="Golightly E.J."/>
            <person name="Grandi G."/>
            <person name="Guiseppi G."/>
            <person name="Guy B.J."/>
            <person name="Haga K."/>
            <person name="Haiech J."/>
            <person name="Harwood C.R."/>
            <person name="Henaut A."/>
            <person name="Hilbert H."/>
            <person name="Holsappel S."/>
            <person name="Hosono S."/>
            <person name="Hullo M.-F."/>
            <person name="Itaya M."/>
            <person name="Jones L.-M."/>
            <person name="Joris B."/>
            <person name="Karamata D."/>
            <person name="Kasahara Y."/>
            <person name="Klaerr-Blanchard M."/>
            <person name="Klein C."/>
            <person name="Kobayashi Y."/>
            <person name="Koetter P."/>
            <person name="Koningstein G."/>
            <person name="Krogh S."/>
            <person name="Kumano M."/>
            <person name="Kurita K."/>
            <person name="Lapidus A."/>
            <person name="Lardinois S."/>
            <person name="Lauber J."/>
            <person name="Lazarevic V."/>
            <person name="Lee S.-M."/>
            <person name="Levine A."/>
            <person name="Liu H."/>
            <person name="Masuda S."/>
            <person name="Mauel C."/>
            <person name="Medigue C."/>
            <person name="Medina N."/>
            <person name="Mellado R.P."/>
            <person name="Mizuno M."/>
            <person name="Moestl D."/>
            <person name="Nakai S."/>
            <person name="Noback M."/>
            <person name="Noone D."/>
            <person name="O'Reilly M."/>
            <person name="Ogawa K."/>
            <person name="Ogiwara A."/>
            <person name="Oudega B."/>
            <person name="Park S.-H."/>
            <person name="Parro V."/>
            <person name="Pohl T.M."/>
            <person name="Portetelle D."/>
            <person name="Porwollik S."/>
            <person name="Prescott A.M."/>
            <person name="Presecan E."/>
            <person name="Pujic P."/>
            <person name="Purnelle B."/>
            <person name="Rapoport G."/>
            <person name="Rey M."/>
            <person name="Reynolds S."/>
            <person name="Rieger M."/>
            <person name="Rivolta C."/>
            <person name="Rocha E."/>
            <person name="Roche B."/>
            <person name="Rose M."/>
            <person name="Sadaie Y."/>
            <person name="Sato T."/>
            <person name="Scanlan E."/>
            <person name="Schleich S."/>
            <person name="Schroeter R."/>
            <person name="Scoffone F."/>
            <person name="Sekiguchi J."/>
            <person name="Sekowska A."/>
            <person name="Seror S.J."/>
            <person name="Serror P."/>
            <person name="Shin B.-S."/>
            <person name="Soldo B."/>
            <person name="Sorokin A."/>
            <person name="Tacconi E."/>
            <person name="Takagi T."/>
            <person name="Takahashi H."/>
            <person name="Takemaru K."/>
            <person name="Takeuchi M."/>
            <person name="Tamakoshi A."/>
            <person name="Tanaka T."/>
            <person name="Terpstra P."/>
            <person name="Tognoni A."/>
            <person name="Tosato V."/>
            <person name="Uchiyama S."/>
            <person name="Vandenbol M."/>
            <person name="Vannier F."/>
            <person name="Vassarotti A."/>
            <person name="Viari A."/>
            <person name="Wambutt R."/>
            <person name="Wedler E."/>
            <person name="Wedler H."/>
            <person name="Weitzenegger T."/>
            <person name="Winters P."/>
            <person name="Wipat A."/>
            <person name="Yamamoto H."/>
            <person name="Yamane K."/>
            <person name="Yasumoto K."/>
            <person name="Yata K."/>
            <person name="Yoshida K."/>
            <person name="Yoshikawa H.-F."/>
            <person name="Zumstein E."/>
            <person name="Yoshikawa H."/>
            <person name="Danchin A."/>
        </authorList>
    </citation>
    <scope>NUCLEOTIDE SEQUENCE [LARGE SCALE GENOMIC DNA]</scope>
    <source>
        <strain>168</strain>
    </source>
</reference>
<reference key="2">
    <citation type="journal article" date="2004" name="Gene">
        <title>Systematic analysis of SigD-regulated genes in Bacillus subtilis by DNA microarray and Northern blotting analyses.</title>
        <authorList>
            <person name="Serizawa M."/>
            <person name="Yamamoto H."/>
            <person name="Yamaguchi H."/>
            <person name="Fujita Y."/>
            <person name="Kobayashi K."/>
            <person name="Ogasawara N."/>
            <person name="Sekiguchi J."/>
        </authorList>
    </citation>
    <scope>INDUCTION</scope>
    <source>
        <strain>168</strain>
    </source>
</reference>
<reference key="3">
    <citation type="submission" date="2006-08" db="PDB data bank">
        <title>Solution NMR structure of the yjcQ protein from Bacillus subtilis. Northeast structural genomics target SR346.</title>
        <authorList>
            <consortium name="Northeast structural genomics consortium (NESG)"/>
        </authorList>
    </citation>
    <scope>STRUCTURE BY NMR</scope>
</reference>
<sequence length="94" mass="11026">MNKDKLRYAILKEIFEGNTPLSENDIGVTEDQFDDAVNFLKREGYIIGVHYSDDRPHLYKLGPELTEKGENYLKENGTWSKAYKTIKEIKDWIK</sequence>
<accession>O31639</accession>
<evidence type="ECO:0000269" key="1">
    <source>
    </source>
</evidence>
<evidence type="ECO:0007829" key="2">
    <source>
        <dbReference type="PDB" id="2HGC"/>
    </source>
</evidence>
<keyword id="KW-0002">3D-structure</keyword>
<keyword id="KW-1185">Reference proteome</keyword>
<protein>
    <recommendedName>
        <fullName>Uncharacterized protein YjcQ</fullName>
    </recommendedName>
</protein>
<dbReference type="EMBL" id="AL009126">
    <property type="protein sequence ID" value="CAB13052.1"/>
    <property type="molecule type" value="Genomic_DNA"/>
</dbReference>
<dbReference type="PIR" id="A69848">
    <property type="entry name" value="A69848"/>
</dbReference>
<dbReference type="RefSeq" id="NP_389077.1">
    <property type="nucleotide sequence ID" value="NC_000964.3"/>
</dbReference>
<dbReference type="RefSeq" id="WP_003245536.1">
    <property type="nucleotide sequence ID" value="NZ_OZ025638.1"/>
</dbReference>
<dbReference type="PDB" id="2HGC">
    <property type="method" value="NMR"/>
    <property type="chains" value="A=1-94"/>
</dbReference>
<dbReference type="PDBsum" id="2HGC"/>
<dbReference type="BMRB" id="O31639"/>
<dbReference type="SMR" id="O31639"/>
<dbReference type="FunCoup" id="O31639">
    <property type="interactions" value="32"/>
</dbReference>
<dbReference type="STRING" id="224308.BSU11950"/>
<dbReference type="jPOST" id="O31639"/>
<dbReference type="PaxDb" id="224308-BSU11950"/>
<dbReference type="EnsemblBacteria" id="CAB13052">
    <property type="protein sequence ID" value="CAB13052"/>
    <property type="gene ID" value="BSU_11950"/>
</dbReference>
<dbReference type="GeneID" id="939821"/>
<dbReference type="KEGG" id="bsu:BSU11950"/>
<dbReference type="PATRIC" id="fig|224308.179.peg.1290"/>
<dbReference type="eggNOG" id="ENOG5034ASK">
    <property type="taxonomic scope" value="Bacteria"/>
</dbReference>
<dbReference type="InParanoid" id="O31639"/>
<dbReference type="OrthoDB" id="2085166at2"/>
<dbReference type="BioCyc" id="BSUB:BSU11950-MONOMER"/>
<dbReference type="EvolutionaryTrace" id="O31639"/>
<dbReference type="Proteomes" id="UP000001570">
    <property type="component" value="Chromosome"/>
</dbReference>
<dbReference type="Gene3D" id="1.10.10.10">
    <property type="entry name" value="Winged helix-like DNA-binding domain superfamily/Winged helix DNA-binding domain"/>
    <property type="match status" value="1"/>
</dbReference>
<dbReference type="InterPro" id="IPR018597">
    <property type="entry name" value="Phage_Tuc2009_YjcQ"/>
</dbReference>
<dbReference type="InterPro" id="IPR036388">
    <property type="entry name" value="WH-like_DNA-bd_sf"/>
</dbReference>
<dbReference type="InterPro" id="IPR036390">
    <property type="entry name" value="WH_DNA-bd_sf"/>
</dbReference>
<dbReference type="Pfam" id="PF09639">
    <property type="entry name" value="YjcQ"/>
    <property type="match status" value="1"/>
</dbReference>
<dbReference type="SUPFAM" id="SSF46785">
    <property type="entry name" value="Winged helix' DNA-binding domain"/>
    <property type="match status" value="1"/>
</dbReference>
<gene>
    <name type="primary">yjcQ</name>
    <name type="ordered locus">BSU11950</name>
</gene>
<proteinExistence type="evidence at protein level"/>